<comment type="catalytic activity">
    <reaction evidence="1">
        <text>tRNA(Gly) + glycine + ATP = glycyl-tRNA(Gly) + AMP + diphosphate</text>
        <dbReference type="Rhea" id="RHEA:16013"/>
        <dbReference type="Rhea" id="RHEA-COMP:9664"/>
        <dbReference type="Rhea" id="RHEA-COMP:9683"/>
        <dbReference type="ChEBI" id="CHEBI:30616"/>
        <dbReference type="ChEBI" id="CHEBI:33019"/>
        <dbReference type="ChEBI" id="CHEBI:57305"/>
        <dbReference type="ChEBI" id="CHEBI:78442"/>
        <dbReference type="ChEBI" id="CHEBI:78522"/>
        <dbReference type="ChEBI" id="CHEBI:456215"/>
        <dbReference type="EC" id="6.1.1.14"/>
    </reaction>
</comment>
<comment type="subunit">
    <text evidence="1">Tetramer of two alpha and two beta subunits.</text>
</comment>
<comment type="subcellular location">
    <subcellularLocation>
        <location evidence="1">Cytoplasm</location>
    </subcellularLocation>
</comment>
<comment type="similarity">
    <text evidence="1">Belongs to the class-II aminoacyl-tRNA synthetase family.</text>
</comment>
<name>SYGA_STRP1</name>
<feature type="chain" id="PRO_0000072871" description="Glycine--tRNA ligase alpha subunit">
    <location>
        <begin position="1"/>
        <end position="305"/>
    </location>
</feature>
<organism>
    <name type="scientific">Streptococcus pyogenes serotype M1</name>
    <dbReference type="NCBI Taxonomy" id="301447"/>
    <lineage>
        <taxon>Bacteria</taxon>
        <taxon>Bacillati</taxon>
        <taxon>Bacillota</taxon>
        <taxon>Bacilli</taxon>
        <taxon>Lactobacillales</taxon>
        <taxon>Streptococcaceae</taxon>
        <taxon>Streptococcus</taxon>
    </lineage>
</organism>
<gene>
    <name evidence="1" type="primary">glyQ</name>
    <name type="ordered locus">SPy_1689</name>
    <name type="ordered locus">M5005_Spy1385</name>
</gene>
<evidence type="ECO:0000255" key="1">
    <source>
        <dbReference type="HAMAP-Rule" id="MF_00254"/>
    </source>
</evidence>
<reference key="1">
    <citation type="journal article" date="2001" name="Proc. Natl. Acad. Sci. U.S.A.">
        <title>Complete genome sequence of an M1 strain of Streptococcus pyogenes.</title>
        <authorList>
            <person name="Ferretti J.J."/>
            <person name="McShan W.M."/>
            <person name="Ajdic D.J."/>
            <person name="Savic D.J."/>
            <person name="Savic G."/>
            <person name="Lyon K."/>
            <person name="Primeaux C."/>
            <person name="Sezate S."/>
            <person name="Suvorov A.N."/>
            <person name="Kenton S."/>
            <person name="Lai H.S."/>
            <person name="Lin S.P."/>
            <person name="Qian Y."/>
            <person name="Jia H.G."/>
            <person name="Najar F.Z."/>
            <person name="Ren Q."/>
            <person name="Zhu H."/>
            <person name="Song L."/>
            <person name="White J."/>
            <person name="Yuan X."/>
            <person name="Clifton S.W."/>
            <person name="Roe B.A."/>
            <person name="McLaughlin R.E."/>
        </authorList>
    </citation>
    <scope>NUCLEOTIDE SEQUENCE [LARGE SCALE GENOMIC DNA]</scope>
    <source>
        <strain>ATCC 700294 / SF370 / Serotype M1</strain>
    </source>
</reference>
<reference key="2">
    <citation type="journal article" date="2005" name="J. Infect. Dis.">
        <title>Evolutionary origin and emergence of a highly successful clone of serotype M1 group A Streptococcus involved multiple horizontal gene transfer events.</title>
        <authorList>
            <person name="Sumby P."/>
            <person name="Porcella S.F."/>
            <person name="Madrigal A.G."/>
            <person name="Barbian K.D."/>
            <person name="Virtaneva K."/>
            <person name="Ricklefs S.M."/>
            <person name="Sturdevant D.E."/>
            <person name="Graham M.R."/>
            <person name="Vuopio-Varkila J."/>
            <person name="Hoe N.P."/>
            <person name="Musser J.M."/>
        </authorList>
    </citation>
    <scope>NUCLEOTIDE SEQUENCE [LARGE SCALE GENOMIC DNA]</scope>
    <source>
        <strain>ATCC BAA-947 / MGAS5005 / Serotype M1</strain>
    </source>
</reference>
<protein>
    <recommendedName>
        <fullName evidence="1">Glycine--tRNA ligase alpha subunit</fullName>
        <ecNumber evidence="1">6.1.1.14</ecNumber>
    </recommendedName>
    <alternativeName>
        <fullName evidence="1">Glycyl-tRNA synthetase alpha subunit</fullName>
        <shortName evidence="1">GlyRS</shortName>
    </alternativeName>
</protein>
<proteinExistence type="inferred from homology"/>
<accession>Q99YI3</accession>
<accession>Q48XC2</accession>
<sequence length="305" mass="34833">MSKKLTFQEIILTLQQYWNDQGCMLMQAYDNEKGAGTMSPYTFLRAIGPEPWNAAYVEPSRRPADGRYGENPNRLYQHHQFQVVMKPSPSNIQELYLASLEKLGINPLEHDIRFVEDNWENPSTGSAGLGWEVWLDGMEITQFTYFQQVGGLATSPVTAEVTYGLERLASYIQEVDSVYDIEWAPGVKYGEIFLQPEYEHSKYSFEISDQDMLLENFEKFEKEASRALEEGLVHPAYDYVLKCSHTFNLLDARGAVSVTERAGYIARIRNLARVVAKTFVAERKKLGFPLLDEATRAILLAEDDE</sequence>
<keyword id="KW-0030">Aminoacyl-tRNA synthetase</keyword>
<keyword id="KW-0067">ATP-binding</keyword>
<keyword id="KW-0963">Cytoplasm</keyword>
<keyword id="KW-0436">Ligase</keyword>
<keyword id="KW-0547">Nucleotide-binding</keyword>
<keyword id="KW-0648">Protein biosynthesis</keyword>
<keyword id="KW-1185">Reference proteome</keyword>
<dbReference type="EC" id="6.1.1.14" evidence="1"/>
<dbReference type="EMBL" id="AE004092">
    <property type="protein sequence ID" value="AAK34444.1"/>
    <property type="molecule type" value="Genomic_DNA"/>
</dbReference>
<dbReference type="EMBL" id="CP000017">
    <property type="protein sequence ID" value="AAZ52003.1"/>
    <property type="molecule type" value="Genomic_DNA"/>
</dbReference>
<dbReference type="RefSeq" id="NP_269723.1">
    <property type="nucleotide sequence ID" value="NC_002737.2"/>
</dbReference>
<dbReference type="SMR" id="Q99YI3"/>
<dbReference type="PaxDb" id="1314-HKU360_01437"/>
<dbReference type="KEGG" id="spy:SPy_1689"/>
<dbReference type="KEGG" id="spz:M5005_Spy1385"/>
<dbReference type="PATRIC" id="fig|160490.10.peg.1470"/>
<dbReference type="HOGENOM" id="CLU_057066_1_0_9"/>
<dbReference type="OMA" id="SYYQFQV"/>
<dbReference type="Proteomes" id="UP000000750">
    <property type="component" value="Chromosome"/>
</dbReference>
<dbReference type="GO" id="GO:0005829">
    <property type="term" value="C:cytosol"/>
    <property type="evidence" value="ECO:0007669"/>
    <property type="project" value="TreeGrafter"/>
</dbReference>
<dbReference type="GO" id="GO:0005524">
    <property type="term" value="F:ATP binding"/>
    <property type="evidence" value="ECO:0007669"/>
    <property type="project" value="UniProtKB-UniRule"/>
</dbReference>
<dbReference type="GO" id="GO:0140096">
    <property type="term" value="F:catalytic activity, acting on a protein"/>
    <property type="evidence" value="ECO:0007669"/>
    <property type="project" value="UniProtKB-ARBA"/>
</dbReference>
<dbReference type="GO" id="GO:0004820">
    <property type="term" value="F:glycine-tRNA ligase activity"/>
    <property type="evidence" value="ECO:0007669"/>
    <property type="project" value="UniProtKB-UniRule"/>
</dbReference>
<dbReference type="GO" id="GO:0016740">
    <property type="term" value="F:transferase activity"/>
    <property type="evidence" value="ECO:0007669"/>
    <property type="project" value="UniProtKB-ARBA"/>
</dbReference>
<dbReference type="GO" id="GO:0006426">
    <property type="term" value="P:glycyl-tRNA aminoacylation"/>
    <property type="evidence" value="ECO:0007669"/>
    <property type="project" value="UniProtKB-UniRule"/>
</dbReference>
<dbReference type="CDD" id="cd00733">
    <property type="entry name" value="GlyRS_alpha_core"/>
    <property type="match status" value="1"/>
</dbReference>
<dbReference type="FunFam" id="3.30.930.10:FF:000006">
    <property type="entry name" value="Glycine--tRNA ligase alpha subunit"/>
    <property type="match status" value="1"/>
</dbReference>
<dbReference type="Gene3D" id="3.30.930.10">
    <property type="entry name" value="Bira Bifunctional Protein, Domain 2"/>
    <property type="match status" value="1"/>
</dbReference>
<dbReference type="Gene3D" id="1.20.58.180">
    <property type="entry name" value="Class II aaRS and biotin synthetases, domain 2"/>
    <property type="match status" value="1"/>
</dbReference>
<dbReference type="HAMAP" id="MF_00254">
    <property type="entry name" value="Gly_tRNA_synth_alpha"/>
    <property type="match status" value="1"/>
</dbReference>
<dbReference type="InterPro" id="IPR045864">
    <property type="entry name" value="aa-tRNA-synth_II/BPL/LPL"/>
</dbReference>
<dbReference type="InterPro" id="IPR006194">
    <property type="entry name" value="Gly-tRNA-synth_heterodimer"/>
</dbReference>
<dbReference type="InterPro" id="IPR002310">
    <property type="entry name" value="Gly-tRNA_ligase_asu"/>
</dbReference>
<dbReference type="NCBIfam" id="TIGR00388">
    <property type="entry name" value="glyQ"/>
    <property type="match status" value="1"/>
</dbReference>
<dbReference type="NCBIfam" id="NF006827">
    <property type="entry name" value="PRK09348.1"/>
    <property type="match status" value="1"/>
</dbReference>
<dbReference type="PANTHER" id="PTHR30075:SF2">
    <property type="entry name" value="GLYCINE--TRNA LIGASE, CHLOROPLASTIC_MITOCHONDRIAL 2"/>
    <property type="match status" value="1"/>
</dbReference>
<dbReference type="PANTHER" id="PTHR30075">
    <property type="entry name" value="GLYCYL-TRNA SYNTHETASE"/>
    <property type="match status" value="1"/>
</dbReference>
<dbReference type="Pfam" id="PF02091">
    <property type="entry name" value="tRNA-synt_2e"/>
    <property type="match status" value="1"/>
</dbReference>
<dbReference type="PRINTS" id="PR01044">
    <property type="entry name" value="TRNASYNTHGA"/>
</dbReference>
<dbReference type="SUPFAM" id="SSF55681">
    <property type="entry name" value="Class II aaRS and biotin synthetases"/>
    <property type="match status" value="1"/>
</dbReference>
<dbReference type="PROSITE" id="PS50861">
    <property type="entry name" value="AA_TRNA_LIGASE_II_GLYAB"/>
    <property type="match status" value="1"/>
</dbReference>